<name>ASMA_ECOLI</name>
<evidence type="ECO:0000255" key="1"/>
<evidence type="ECO:0000256" key="2">
    <source>
        <dbReference type="SAM" id="MobiDB-lite"/>
    </source>
</evidence>
<evidence type="ECO:0000269" key="3">
    <source>
    </source>
</evidence>
<evidence type="ECO:0000269" key="4">
    <source>
    </source>
</evidence>
<evidence type="ECO:0000269" key="5">
    <source>
    </source>
</evidence>
<evidence type="ECO:0000303" key="6">
    <source>
    </source>
</evidence>
<evidence type="ECO:0000305" key="7"/>
<evidence type="ECO:0000305" key="8">
    <source>
    </source>
</evidence>
<protein>
    <recommendedName>
        <fullName>Protein AsmA</fullName>
    </recommendedName>
</protein>
<organism>
    <name type="scientific">Escherichia coli (strain K12)</name>
    <dbReference type="NCBI Taxonomy" id="83333"/>
    <lineage>
        <taxon>Bacteria</taxon>
        <taxon>Pseudomonadati</taxon>
        <taxon>Pseudomonadota</taxon>
        <taxon>Gammaproteobacteria</taxon>
        <taxon>Enterobacterales</taxon>
        <taxon>Enterobacteriaceae</taxon>
        <taxon>Escherichia</taxon>
    </lineage>
</organism>
<comment type="function">
    <text evidence="4 5">Could be involved in the assembly of outer membrane proteins (PubMed:7476172, PubMed:8866482). May indirectly influence the assembly of outer membrane proteins, potentially by altering outer membrane fluidity (PubMed:8866482). Inhibits the assembly of mutant forms of outer membrane protein F (OmpF) (PubMed:7476172).</text>
</comment>
<comment type="subcellular location">
    <subcellularLocation>
        <location evidence="5">Cell inner membrane</location>
        <topology evidence="1">Single-pass membrane protein</topology>
    </subcellularLocation>
</comment>
<comment type="disruption phenotype">
    <text evidence="3 5">The mutant does not exhibit growth defects but it shows a slight increase in outer membrane permeability (PubMed:34781743). Cells lacking this gene show a significant increase in sensitivity towards hydrophobic antibiotics (PubMed:8866482). Deletion of the gene also reduces lipopolysaccharide (LPS) levels, affecting the ratios of glycerolphospholipids to LPS and envelope proteins to LPS in the outer membrane (PubMed:8866482).</text>
</comment>
<comment type="similarity">
    <text evidence="7">Belongs to the AsmA family.</text>
</comment>
<accession>P28249</accession>
<accession>P76390</accession>
<keyword id="KW-0997">Cell inner membrane</keyword>
<keyword id="KW-1003">Cell membrane</keyword>
<keyword id="KW-0472">Membrane</keyword>
<keyword id="KW-1185">Reference proteome</keyword>
<keyword id="KW-0812">Transmembrane</keyword>
<keyword id="KW-1133">Transmembrane helix</keyword>
<feature type="chain" id="PRO_0000020759" description="Protein AsmA">
    <location>
        <begin position="1"/>
        <end position="617"/>
    </location>
</feature>
<feature type="topological domain" description="Cytoplasmic" evidence="8">
    <location>
        <begin position="1"/>
        <end position="3"/>
    </location>
</feature>
<feature type="transmembrane region" description="Helical" evidence="1">
    <location>
        <begin position="4"/>
        <end position="24"/>
    </location>
</feature>
<feature type="topological domain" description="Periplasmic" evidence="8">
    <location>
        <begin position="25"/>
        <end position="617"/>
    </location>
</feature>
<feature type="region of interest" description="Disordered" evidence="2">
    <location>
        <begin position="302"/>
        <end position="321"/>
    </location>
</feature>
<feature type="compositionally biased region" description="Polar residues" evidence="2">
    <location>
        <begin position="302"/>
        <end position="319"/>
    </location>
</feature>
<feature type="sequence conflict" description="In Ref. 1; AAD14778." evidence="7" ref="1">
    <original>GMNFTDVATQMTNKSGLLEITQLQGK</original>
    <variation>NEFYRCCHANDQQVGFAGNYSTAGQT</variation>
    <location>
        <begin position="354"/>
        <end position="379"/>
    </location>
</feature>
<sequence>MRRFLTTLMILLVVLVAGLSALVLLVNPNDFRDYMVKQVAARSGYQLQLDGPLRWHVWPQLSILSGRMSLTAQGASQPLVRADNMRLDVALLPLLSHQLSVKQVMLKGAVIQLTPQTEAVRSEDAPVAPRDNTLPDLSDDRGWSFDISSLKVADSVLVFQHEDDEQVTIRNIRLQMEQDPQHRGSFEFSGRVNRDQRDLTISLNGTVDASDYPHDLTAAIEQINWQLQGADLPKQGIQGQGSFQAQWQESHKRLSFNQISLTANDSTLSGQAQVTLTEKPEWQLRLQFPQLNLDNLIPLNETANGENGAAQQGQSQSTLPRPVISSRIDEPAYQGLQGFTADILLQASNVRWRGMNFTDVATQMTNKSGLLEITQLQGKLNGGQVSLPGTLDATSINPRINFQPRLENVEIGTILKAFNYPISLTGKMSLAGDFSGADIDADAFRHNWQGQAHVEMTDTRMEGMNFQQMIQQAVERNGGDVKAAENFDNVTRLDRFTTDLTLKDGVVTLNDMQGQSPVLALTGEGMLNLADQTCDTQFDIRVVGGWNGESKLIDFLKETPVPLRVYGNWQQLNYSLQVDQLLRKHLQDEAKRRLNDWAERNKDSRNGKDVKKLLEKM</sequence>
<dbReference type="EMBL" id="U11035">
    <property type="protein sequence ID" value="AAD14778.1"/>
    <property type="molecule type" value="Genomic_DNA"/>
</dbReference>
<dbReference type="EMBL" id="U00096">
    <property type="protein sequence ID" value="AAC75125.1"/>
    <property type="molecule type" value="Genomic_DNA"/>
</dbReference>
<dbReference type="EMBL" id="AP009048">
    <property type="protein sequence ID" value="BAA15917.1"/>
    <property type="molecule type" value="Genomic_DNA"/>
</dbReference>
<dbReference type="EMBL" id="M90069">
    <property type="protein sequence ID" value="AAA23670.1"/>
    <property type="molecule type" value="Genomic_DNA"/>
</dbReference>
<dbReference type="PIR" id="G64972">
    <property type="entry name" value="G64972"/>
</dbReference>
<dbReference type="RefSeq" id="NP_416568.1">
    <property type="nucleotide sequence ID" value="NC_000913.3"/>
</dbReference>
<dbReference type="RefSeq" id="WP_001252331.1">
    <property type="nucleotide sequence ID" value="NZ_STEB01000002.1"/>
</dbReference>
<dbReference type="SMR" id="P28249"/>
<dbReference type="BioGRID" id="4259685">
    <property type="interactions" value="272"/>
</dbReference>
<dbReference type="DIP" id="DIP-9175N"/>
<dbReference type="FunCoup" id="P28249">
    <property type="interactions" value="140"/>
</dbReference>
<dbReference type="IntAct" id="P28249">
    <property type="interactions" value="9"/>
</dbReference>
<dbReference type="STRING" id="511145.b2064"/>
<dbReference type="TCDB" id="9.B.121.5.1">
    <property type="family name" value="the asma (asma) family"/>
</dbReference>
<dbReference type="jPOST" id="P28249"/>
<dbReference type="PaxDb" id="511145-b2064"/>
<dbReference type="EnsemblBacteria" id="AAC75125">
    <property type="protein sequence ID" value="AAC75125"/>
    <property type="gene ID" value="b2064"/>
</dbReference>
<dbReference type="GeneID" id="93775127"/>
<dbReference type="GeneID" id="946582"/>
<dbReference type="KEGG" id="ecj:JW2049"/>
<dbReference type="KEGG" id="eco:b2064"/>
<dbReference type="KEGG" id="ecoc:C3026_11610"/>
<dbReference type="PATRIC" id="fig|1411691.4.peg.187"/>
<dbReference type="EchoBASE" id="EB1336"/>
<dbReference type="eggNOG" id="COG2982">
    <property type="taxonomic scope" value="Bacteria"/>
</dbReference>
<dbReference type="HOGENOM" id="CLU_012870_3_1_6"/>
<dbReference type="InParanoid" id="P28249"/>
<dbReference type="OMA" id="FPWLGLE"/>
<dbReference type="OrthoDB" id="9766390at2"/>
<dbReference type="PhylomeDB" id="P28249"/>
<dbReference type="BioCyc" id="EcoCyc:EG11361-MONOMER"/>
<dbReference type="PRO" id="PR:P28249"/>
<dbReference type="Proteomes" id="UP000000625">
    <property type="component" value="Chromosome"/>
</dbReference>
<dbReference type="GO" id="GO:0042597">
    <property type="term" value="C:periplasmic space"/>
    <property type="evidence" value="ECO:0007669"/>
    <property type="project" value="UniProtKB-SubCell"/>
</dbReference>
<dbReference type="GO" id="GO:0005886">
    <property type="term" value="C:plasma membrane"/>
    <property type="evidence" value="ECO:0000314"/>
    <property type="project" value="EcoCyc"/>
</dbReference>
<dbReference type="GO" id="GO:0090313">
    <property type="term" value="P:regulation of protein targeting to membrane"/>
    <property type="evidence" value="ECO:0000315"/>
    <property type="project" value="EcoCyc"/>
</dbReference>
<dbReference type="InterPro" id="IPR007844">
    <property type="entry name" value="AsmA"/>
</dbReference>
<dbReference type="InterPro" id="IPR052894">
    <property type="entry name" value="AsmA-related"/>
</dbReference>
<dbReference type="NCBIfam" id="NF008091">
    <property type="entry name" value="PRK10833.1"/>
    <property type="match status" value="1"/>
</dbReference>
<dbReference type="PANTHER" id="PTHR30441">
    <property type="entry name" value="DUF748 DOMAIN-CONTAINING PROTEIN"/>
    <property type="match status" value="1"/>
</dbReference>
<dbReference type="PANTHER" id="PTHR30441:SF4">
    <property type="entry name" value="PROTEIN ASMA"/>
    <property type="match status" value="1"/>
</dbReference>
<dbReference type="Pfam" id="PF05170">
    <property type="entry name" value="AsmA"/>
    <property type="match status" value="1"/>
</dbReference>
<reference key="1">
    <citation type="journal article" date="1995" name="Mol. Microbiol.">
        <title>Molecular analysis of asmA, a locus identified as the suppressor of OmpF assembly mutants of Escherichia coli K-12.</title>
        <authorList>
            <person name="Misra R."/>
            <person name="Miao Y."/>
        </authorList>
    </citation>
    <scope>NUCLEOTIDE SEQUENCE [GENOMIC DNA] OF 1-379</scope>
    <scope>FUNCTION</scope>
    <source>
        <strain>K12</strain>
    </source>
</reference>
<reference key="2">
    <citation type="journal article" date="1996" name="DNA Res.">
        <title>A 460-kb DNA sequence of the Escherichia coli K-12 genome corresponding to the 40.1-50.0 min region on the linkage map.</title>
        <authorList>
            <person name="Itoh T."/>
            <person name="Aiba H."/>
            <person name="Baba T."/>
            <person name="Fujita K."/>
            <person name="Hayashi K."/>
            <person name="Inada T."/>
            <person name="Isono K."/>
            <person name="Kasai H."/>
            <person name="Kimura S."/>
            <person name="Kitakawa M."/>
            <person name="Kitagawa M."/>
            <person name="Makino K."/>
            <person name="Miki T."/>
            <person name="Mizobuchi K."/>
            <person name="Mori H."/>
            <person name="Mori T."/>
            <person name="Motomura K."/>
            <person name="Nakade S."/>
            <person name="Nakamura Y."/>
            <person name="Nashimoto H."/>
            <person name="Nishio Y."/>
            <person name="Oshima T."/>
            <person name="Saito N."/>
            <person name="Sampei G."/>
            <person name="Seki Y."/>
            <person name="Sivasundaram S."/>
            <person name="Tagami H."/>
            <person name="Takeda J."/>
            <person name="Takemoto K."/>
            <person name="Wada C."/>
            <person name="Yamamoto Y."/>
            <person name="Horiuchi T."/>
        </authorList>
    </citation>
    <scope>NUCLEOTIDE SEQUENCE [LARGE SCALE GENOMIC DNA]</scope>
    <source>
        <strain>K12 / W3110 / ATCC 27325 / DSM 5911</strain>
    </source>
</reference>
<reference key="3">
    <citation type="journal article" date="1997" name="Science">
        <title>The complete genome sequence of Escherichia coli K-12.</title>
        <authorList>
            <person name="Blattner F.R."/>
            <person name="Plunkett G. III"/>
            <person name="Bloch C.A."/>
            <person name="Perna N.T."/>
            <person name="Burland V."/>
            <person name="Riley M."/>
            <person name="Collado-Vides J."/>
            <person name="Glasner J.D."/>
            <person name="Rode C.K."/>
            <person name="Mayhew G.F."/>
            <person name="Gregor J."/>
            <person name="Davis N.W."/>
            <person name="Kirkpatrick H.A."/>
            <person name="Goeden M.A."/>
            <person name="Rose D.J."/>
            <person name="Mau B."/>
            <person name="Shao Y."/>
        </authorList>
    </citation>
    <scope>NUCLEOTIDE SEQUENCE [LARGE SCALE GENOMIC DNA]</scope>
    <source>
        <strain>K12 / MG1655 / ATCC 47076</strain>
    </source>
</reference>
<reference key="4">
    <citation type="journal article" date="2006" name="Mol. Syst. Biol.">
        <title>Highly accurate genome sequences of Escherichia coli K-12 strains MG1655 and W3110.</title>
        <authorList>
            <person name="Hayashi K."/>
            <person name="Morooka N."/>
            <person name="Yamamoto Y."/>
            <person name="Fujita K."/>
            <person name="Isono K."/>
            <person name="Choi S."/>
            <person name="Ohtsubo E."/>
            <person name="Baba T."/>
            <person name="Wanner B.L."/>
            <person name="Mori H."/>
            <person name="Horiuchi T."/>
        </authorList>
    </citation>
    <scope>NUCLEOTIDE SEQUENCE [LARGE SCALE GENOMIC DNA]</scope>
    <source>
        <strain>K12 / W3110 / ATCC 27325 / DSM 5911</strain>
    </source>
</reference>
<reference key="5">
    <citation type="journal article" date="1992" name="J. Bacteriol.">
        <title>dcd (dCTP deaminase) gene of Escherichia coli: mapping, cloning, sequencing, and identification as a locus of suppressors of lethal dut (dUTPase) mutations.</title>
        <authorList>
            <person name="Wang L."/>
            <person name="Weiss B."/>
        </authorList>
    </citation>
    <scope>NUCLEOTIDE SEQUENCE [GENOMIC DNA] OF 1-200</scope>
</reference>
<reference key="6">
    <citation type="journal article" date="1996" name="Mol. Microbiol.">
        <title>Examination of AsmA and its effect on the assembly of Escherichia coli outer membrane proteins.</title>
        <authorList>
            <person name="Deng M."/>
            <person name="Misra R."/>
        </authorList>
    </citation>
    <scope>FUNCTION</scope>
    <scope>SUBCELLULAR LOCATION</scope>
    <scope>DISRUPTION PHENOTYPE</scope>
</reference>
<reference key="7">
    <citation type="journal article" date="2021" name="MBio">
        <title>YhdP, TamB, and YdbH Are Redundant but Essential for Growth and Lipid Homeostasis of the Gram-Negative Outer Membrane.</title>
        <authorList>
            <person name="Ruiz N."/>
            <person name="Davis R.M."/>
            <person name="Kumar S."/>
        </authorList>
    </citation>
    <scope>DISRUPTION PHENOTYPE</scope>
    <source>
        <strain>K12 / MG1655 / ATCC 47076</strain>
    </source>
</reference>
<proteinExistence type="inferred from homology"/>
<gene>
    <name evidence="6" type="primary">asmA</name>
    <name type="synonym">yegA</name>
    <name type="ordered locus">b2064</name>
    <name type="ordered locus">JW2049</name>
</gene>